<proteinExistence type="evidence at transcript level"/>
<keyword id="KW-1217">Cell adhesion impairing toxin</keyword>
<keyword id="KW-1199">Hemostasis impairing toxin</keyword>
<keyword id="KW-1201">Platelet aggregation inhibiting toxin</keyword>
<keyword id="KW-0964">Secreted</keyword>
<keyword id="KW-0732">Signal</keyword>
<keyword id="KW-0800">Toxin</keyword>
<accession>C8YJG3</accession>
<reference evidence="6" key="1">
    <citation type="journal article" date="2009" name="Mol. Cell. Proteomics">
        <title>Anti-thrombosis repertoire of blood-feeding horsefly salivary glands.</title>
        <authorList>
            <person name="Ma D."/>
            <person name="Wang Y."/>
            <person name="Yang H."/>
            <person name="Wu J."/>
            <person name="An S."/>
            <person name="Gao L."/>
            <person name="Xu X."/>
            <person name="Lai R."/>
        </authorList>
    </citation>
    <scope>NUCLEOTIDE SEQUENCE [MRNA]</scope>
    <source>
        <tissue>Salivary gland</tissue>
    </source>
</reference>
<evidence type="ECO:0000250" key="1">
    <source>
        <dbReference type="UniProtKB" id="C1IBY3"/>
    </source>
</evidence>
<evidence type="ECO:0000250" key="2">
    <source>
        <dbReference type="UniProtKB" id="C8YJA0"/>
    </source>
</evidence>
<evidence type="ECO:0000303" key="3">
    <source>
    </source>
</evidence>
<evidence type="ECO:0000305" key="4"/>
<evidence type="ECO:0000305" key="5">
    <source>
    </source>
</evidence>
<evidence type="ECO:0000312" key="6">
    <source>
        <dbReference type="EMBL" id="ACT33295.1"/>
    </source>
</evidence>
<feature type="signal peptide" evidence="2">
    <location>
        <begin position="1"/>
        <end position="23"/>
    </location>
</feature>
<feature type="chain" id="PRO_0000456095" description="Tabinhibitin 8" evidence="2">
    <location>
        <begin position="24"/>
        <end position="244"/>
    </location>
</feature>
<feature type="domain" description="SCP" evidence="2">
    <location>
        <begin position="67"/>
        <end position="194"/>
    </location>
</feature>
<feature type="short sequence motif" description="Cell attachment site" evidence="5">
    <location>
        <begin position="143"/>
        <end position="145"/>
    </location>
</feature>
<name>INH8_TABYA</name>
<comment type="function">
    <text evidence="2">Inhibits platelet aggregation induced by all agonists tested (ADP, arachidonic acid, the thromboxane A2 analog U46619, thrombin, and snake venom snaclecs (TMVA that activates platelet through GPIB, and stejnulxin that specifically acts through GPVI (GP6))) (By similarity). May act by competing with fibrinogen for binding to glycoprotein IIb/IIIa (ITGA2B/ITGB3) (By similarity).</text>
</comment>
<comment type="subcellular location">
    <subcellularLocation>
        <location evidence="1">Secreted</location>
    </subcellularLocation>
</comment>
<comment type="tissue specificity">
    <text evidence="1">Expressed in salivary glands.</text>
</comment>
<comment type="similarity">
    <text evidence="4">Belongs to the CRISP family.</text>
</comment>
<dbReference type="EMBL" id="FJ477724">
    <property type="protein sequence ID" value="ACT33295.1"/>
    <property type="molecule type" value="mRNA"/>
</dbReference>
<dbReference type="SMR" id="C8YJG3"/>
<dbReference type="GO" id="GO:0005576">
    <property type="term" value="C:extracellular region"/>
    <property type="evidence" value="ECO:0007669"/>
    <property type="project" value="UniProtKB-SubCell"/>
</dbReference>
<dbReference type="GO" id="GO:0090729">
    <property type="term" value="F:toxin activity"/>
    <property type="evidence" value="ECO:0007669"/>
    <property type="project" value="UniProtKB-KW"/>
</dbReference>
<sequence>MTSILVSRFKISALTLQYATSDSVNFCRIPCRGCDEKFLQCWLVASFHCGKGGPQFQKAKRVFLVRYTGGGIIVLRDSWGYRPFPMKGNVGARCVPEGLKSSPHTRGFRCLAASLECYSAKSFLGPLLCSPQKRGPMQKHNIRGDTLGKSPPCGPKGNFKGLPLVIFDGVPGVGGGLWPGKLGGKTPLFFSSNCFSGKESNPPVYKTGNLCGEKSPKKEETFKNFFFFPDPFNPNEQNFSSFLN</sequence>
<organism>
    <name type="scientific">Tabanus yao</name>
    <name type="common">Horsefly</name>
    <dbReference type="NCBI Taxonomy" id="485572"/>
    <lineage>
        <taxon>Eukaryota</taxon>
        <taxon>Metazoa</taxon>
        <taxon>Ecdysozoa</taxon>
        <taxon>Arthropoda</taxon>
        <taxon>Hexapoda</taxon>
        <taxon>Insecta</taxon>
        <taxon>Pterygota</taxon>
        <taxon>Neoptera</taxon>
        <taxon>Endopterygota</taxon>
        <taxon>Diptera</taxon>
        <taxon>Brachycera</taxon>
        <taxon>Tabanomorpha</taxon>
        <taxon>Tabanoidea</taxon>
        <taxon>Tabanidae</taxon>
        <taxon>Tabanus</taxon>
    </lineage>
</organism>
<protein>
    <recommendedName>
        <fullName evidence="3">Tabinhibitin 8</fullName>
    </recommendedName>
</protein>